<sequence length="432" mass="45780">MAKNVVVIGAQWGDEGKGKIVDWLAEEAGGVVRFQGGHNAGHTLVVGGKKTILRLIPSGILHEGLDCFIGSGVVVSPEALLGEIDELNAAGVKNVEGRLKIAPTCPLILPYHIALDQAREASRGKGKIGTTGRGIGPAYEDKVARRAIRAADLLHPEKLREKLDAVLAYYNVQLQYLHNAGPVKAEDVMAVIEKVAPRIAPMIADVSRVLNEKNKNGEKLLFEGAQGALLDIDYGTYPFVTSSNCLAGAASAGAGVGPQMLDYVLGIVKAYTTRVGSGPFPTELFDEVGAGLAERGHEFGSVTGRARRCGWFDAAALKRSIQINGISGMCITKLDVMDGVETINICVGYELPGGGKTDILPCGSDAVETCKPIYETMPGWRESTVGVKSYDALPANAKAYLKRIEEVCGAPVAIVSTGPDREETIVLHHPFA</sequence>
<feature type="chain" id="PRO_0000224296" description="Adenylosuccinate synthetase">
    <location>
        <begin position="1"/>
        <end position="432"/>
    </location>
</feature>
<feature type="active site" description="Proton acceptor" evidence="1">
    <location>
        <position position="14"/>
    </location>
</feature>
<feature type="active site" description="Proton donor" evidence="1">
    <location>
        <position position="42"/>
    </location>
</feature>
<feature type="binding site" evidence="1">
    <location>
        <begin position="13"/>
        <end position="19"/>
    </location>
    <ligand>
        <name>GTP</name>
        <dbReference type="ChEBI" id="CHEBI:37565"/>
    </ligand>
</feature>
<feature type="binding site" description="in other chain" evidence="1">
    <location>
        <begin position="14"/>
        <end position="17"/>
    </location>
    <ligand>
        <name>IMP</name>
        <dbReference type="ChEBI" id="CHEBI:58053"/>
        <note>ligand shared between dimeric partners</note>
    </ligand>
</feature>
<feature type="binding site" evidence="1">
    <location>
        <position position="14"/>
    </location>
    <ligand>
        <name>Mg(2+)</name>
        <dbReference type="ChEBI" id="CHEBI:18420"/>
    </ligand>
</feature>
<feature type="binding site" description="in other chain" evidence="1">
    <location>
        <begin position="39"/>
        <end position="42"/>
    </location>
    <ligand>
        <name>IMP</name>
        <dbReference type="ChEBI" id="CHEBI:58053"/>
        <note>ligand shared between dimeric partners</note>
    </ligand>
</feature>
<feature type="binding site" evidence="1">
    <location>
        <begin position="41"/>
        <end position="43"/>
    </location>
    <ligand>
        <name>GTP</name>
        <dbReference type="ChEBI" id="CHEBI:37565"/>
    </ligand>
</feature>
<feature type="binding site" evidence="1">
    <location>
        <position position="41"/>
    </location>
    <ligand>
        <name>Mg(2+)</name>
        <dbReference type="ChEBI" id="CHEBI:18420"/>
    </ligand>
</feature>
<feature type="binding site" description="in other chain" evidence="1">
    <location>
        <position position="131"/>
    </location>
    <ligand>
        <name>IMP</name>
        <dbReference type="ChEBI" id="CHEBI:58053"/>
        <note>ligand shared between dimeric partners</note>
    </ligand>
</feature>
<feature type="binding site" evidence="1">
    <location>
        <position position="145"/>
    </location>
    <ligand>
        <name>IMP</name>
        <dbReference type="ChEBI" id="CHEBI:58053"/>
        <note>ligand shared between dimeric partners</note>
    </ligand>
</feature>
<feature type="binding site" description="in other chain" evidence="1">
    <location>
        <position position="226"/>
    </location>
    <ligand>
        <name>IMP</name>
        <dbReference type="ChEBI" id="CHEBI:58053"/>
        <note>ligand shared between dimeric partners</note>
    </ligand>
</feature>
<feature type="binding site" description="in other chain" evidence="1">
    <location>
        <position position="241"/>
    </location>
    <ligand>
        <name>IMP</name>
        <dbReference type="ChEBI" id="CHEBI:58053"/>
        <note>ligand shared between dimeric partners</note>
    </ligand>
</feature>
<feature type="binding site" evidence="1">
    <location>
        <begin position="301"/>
        <end position="307"/>
    </location>
    <ligand>
        <name>substrate</name>
    </ligand>
</feature>
<feature type="binding site" description="in other chain" evidence="1">
    <location>
        <position position="305"/>
    </location>
    <ligand>
        <name>IMP</name>
        <dbReference type="ChEBI" id="CHEBI:58053"/>
        <note>ligand shared between dimeric partners</note>
    </ligand>
</feature>
<feature type="binding site" evidence="1">
    <location>
        <position position="307"/>
    </location>
    <ligand>
        <name>GTP</name>
        <dbReference type="ChEBI" id="CHEBI:37565"/>
    </ligand>
</feature>
<feature type="binding site" evidence="1">
    <location>
        <begin position="333"/>
        <end position="335"/>
    </location>
    <ligand>
        <name>GTP</name>
        <dbReference type="ChEBI" id="CHEBI:37565"/>
    </ligand>
</feature>
<feature type="binding site" evidence="1">
    <location>
        <begin position="416"/>
        <end position="418"/>
    </location>
    <ligand>
        <name>GTP</name>
        <dbReference type="ChEBI" id="CHEBI:37565"/>
    </ligand>
</feature>
<gene>
    <name evidence="1" type="primary">purA</name>
    <name type="ordered locus">NGO_0398</name>
</gene>
<organism>
    <name type="scientific">Neisseria gonorrhoeae (strain ATCC 700825 / FA 1090)</name>
    <dbReference type="NCBI Taxonomy" id="242231"/>
    <lineage>
        <taxon>Bacteria</taxon>
        <taxon>Pseudomonadati</taxon>
        <taxon>Pseudomonadota</taxon>
        <taxon>Betaproteobacteria</taxon>
        <taxon>Neisseriales</taxon>
        <taxon>Neisseriaceae</taxon>
        <taxon>Neisseria</taxon>
    </lineage>
</organism>
<reference key="1">
    <citation type="submission" date="2003-03" db="EMBL/GenBank/DDBJ databases">
        <title>The complete genome sequence of Neisseria gonorrhoeae.</title>
        <authorList>
            <person name="Lewis L.A."/>
            <person name="Gillaspy A.F."/>
            <person name="McLaughlin R.E."/>
            <person name="Gipson M."/>
            <person name="Ducey T.F."/>
            <person name="Ownbey T."/>
            <person name="Hartman K."/>
            <person name="Nydick C."/>
            <person name="Carson M.B."/>
            <person name="Vaughn J."/>
            <person name="Thomson C."/>
            <person name="Song L."/>
            <person name="Lin S."/>
            <person name="Yuan X."/>
            <person name="Najar F."/>
            <person name="Zhan M."/>
            <person name="Ren Q."/>
            <person name="Zhu H."/>
            <person name="Qi S."/>
            <person name="Kenton S.M."/>
            <person name="Lai H."/>
            <person name="White J.D."/>
            <person name="Clifton S."/>
            <person name="Roe B.A."/>
            <person name="Dyer D.W."/>
        </authorList>
    </citation>
    <scope>NUCLEOTIDE SEQUENCE [LARGE SCALE GENOMIC DNA]</scope>
    <source>
        <strain>ATCC 700825 / FA 1090</strain>
    </source>
</reference>
<name>PURA_NEIG1</name>
<evidence type="ECO:0000255" key="1">
    <source>
        <dbReference type="HAMAP-Rule" id="MF_00011"/>
    </source>
</evidence>
<comment type="function">
    <text evidence="1">Plays an important role in the de novo pathway of purine nucleotide biosynthesis. Catalyzes the first committed step in the biosynthesis of AMP from IMP.</text>
</comment>
<comment type="catalytic activity">
    <reaction evidence="1">
        <text>IMP + L-aspartate + GTP = N(6)-(1,2-dicarboxyethyl)-AMP + GDP + phosphate + 2 H(+)</text>
        <dbReference type="Rhea" id="RHEA:15753"/>
        <dbReference type="ChEBI" id="CHEBI:15378"/>
        <dbReference type="ChEBI" id="CHEBI:29991"/>
        <dbReference type="ChEBI" id="CHEBI:37565"/>
        <dbReference type="ChEBI" id="CHEBI:43474"/>
        <dbReference type="ChEBI" id="CHEBI:57567"/>
        <dbReference type="ChEBI" id="CHEBI:58053"/>
        <dbReference type="ChEBI" id="CHEBI:58189"/>
        <dbReference type="EC" id="6.3.4.4"/>
    </reaction>
</comment>
<comment type="cofactor">
    <cofactor evidence="1">
        <name>Mg(2+)</name>
        <dbReference type="ChEBI" id="CHEBI:18420"/>
    </cofactor>
    <text evidence="1">Binds 1 Mg(2+) ion per subunit.</text>
</comment>
<comment type="pathway">
    <text evidence="1">Purine metabolism; AMP biosynthesis via de novo pathway; AMP from IMP: step 1/2.</text>
</comment>
<comment type="subunit">
    <text evidence="1">Homodimer.</text>
</comment>
<comment type="subcellular location">
    <subcellularLocation>
        <location evidence="1">Cytoplasm</location>
    </subcellularLocation>
</comment>
<comment type="similarity">
    <text evidence="1">Belongs to the adenylosuccinate synthetase family.</text>
</comment>
<proteinExistence type="inferred from homology"/>
<keyword id="KW-0963">Cytoplasm</keyword>
<keyword id="KW-0342">GTP-binding</keyword>
<keyword id="KW-0436">Ligase</keyword>
<keyword id="KW-0460">Magnesium</keyword>
<keyword id="KW-0479">Metal-binding</keyword>
<keyword id="KW-0547">Nucleotide-binding</keyword>
<keyword id="KW-0658">Purine biosynthesis</keyword>
<keyword id="KW-1185">Reference proteome</keyword>
<dbReference type="EC" id="6.3.4.4" evidence="1"/>
<dbReference type="EMBL" id="AE004969">
    <property type="protein sequence ID" value="AAW89142.2"/>
    <property type="molecule type" value="Genomic_DNA"/>
</dbReference>
<dbReference type="RefSeq" id="WP_010359891.1">
    <property type="nucleotide sequence ID" value="NC_002946.2"/>
</dbReference>
<dbReference type="SMR" id="Q5F9J5"/>
<dbReference type="STRING" id="242231.NGO_0398"/>
<dbReference type="KEGG" id="ngo:NGO_0398"/>
<dbReference type="PATRIC" id="fig|242231.10.peg.479"/>
<dbReference type="HOGENOM" id="CLU_029848_0_0_4"/>
<dbReference type="UniPathway" id="UPA00075">
    <property type="reaction ID" value="UER00335"/>
</dbReference>
<dbReference type="Proteomes" id="UP000000535">
    <property type="component" value="Chromosome"/>
</dbReference>
<dbReference type="GO" id="GO:0005737">
    <property type="term" value="C:cytoplasm"/>
    <property type="evidence" value="ECO:0007669"/>
    <property type="project" value="UniProtKB-SubCell"/>
</dbReference>
<dbReference type="GO" id="GO:0004019">
    <property type="term" value="F:adenylosuccinate synthase activity"/>
    <property type="evidence" value="ECO:0007669"/>
    <property type="project" value="UniProtKB-UniRule"/>
</dbReference>
<dbReference type="GO" id="GO:0005525">
    <property type="term" value="F:GTP binding"/>
    <property type="evidence" value="ECO:0007669"/>
    <property type="project" value="UniProtKB-UniRule"/>
</dbReference>
<dbReference type="GO" id="GO:0000287">
    <property type="term" value="F:magnesium ion binding"/>
    <property type="evidence" value="ECO:0007669"/>
    <property type="project" value="UniProtKB-UniRule"/>
</dbReference>
<dbReference type="GO" id="GO:0044208">
    <property type="term" value="P:'de novo' AMP biosynthetic process"/>
    <property type="evidence" value="ECO:0007669"/>
    <property type="project" value="UniProtKB-UniRule"/>
</dbReference>
<dbReference type="GO" id="GO:0046040">
    <property type="term" value="P:IMP metabolic process"/>
    <property type="evidence" value="ECO:0007669"/>
    <property type="project" value="TreeGrafter"/>
</dbReference>
<dbReference type="CDD" id="cd03108">
    <property type="entry name" value="AdSS"/>
    <property type="match status" value="1"/>
</dbReference>
<dbReference type="FunFam" id="1.10.300.10:FF:000001">
    <property type="entry name" value="Adenylosuccinate synthetase"/>
    <property type="match status" value="1"/>
</dbReference>
<dbReference type="FunFam" id="3.90.170.10:FF:000001">
    <property type="entry name" value="Adenylosuccinate synthetase"/>
    <property type="match status" value="1"/>
</dbReference>
<dbReference type="Gene3D" id="3.40.440.10">
    <property type="entry name" value="Adenylosuccinate Synthetase, subunit A, domain 1"/>
    <property type="match status" value="1"/>
</dbReference>
<dbReference type="Gene3D" id="1.10.300.10">
    <property type="entry name" value="Adenylosuccinate Synthetase, subunit A, domain 2"/>
    <property type="match status" value="1"/>
</dbReference>
<dbReference type="Gene3D" id="3.90.170.10">
    <property type="entry name" value="Adenylosuccinate Synthetase, subunit A, domain 3"/>
    <property type="match status" value="1"/>
</dbReference>
<dbReference type="HAMAP" id="MF_00011">
    <property type="entry name" value="Adenylosucc_synth"/>
    <property type="match status" value="1"/>
</dbReference>
<dbReference type="InterPro" id="IPR018220">
    <property type="entry name" value="Adenylosuccin_syn_GTP-bd"/>
</dbReference>
<dbReference type="InterPro" id="IPR033128">
    <property type="entry name" value="Adenylosuccin_syn_Lys_AS"/>
</dbReference>
<dbReference type="InterPro" id="IPR042109">
    <property type="entry name" value="Adenylosuccinate_synth_dom1"/>
</dbReference>
<dbReference type="InterPro" id="IPR042110">
    <property type="entry name" value="Adenylosuccinate_synth_dom2"/>
</dbReference>
<dbReference type="InterPro" id="IPR042111">
    <property type="entry name" value="Adenylosuccinate_synth_dom3"/>
</dbReference>
<dbReference type="InterPro" id="IPR001114">
    <property type="entry name" value="Adenylosuccinate_synthetase"/>
</dbReference>
<dbReference type="InterPro" id="IPR027417">
    <property type="entry name" value="P-loop_NTPase"/>
</dbReference>
<dbReference type="NCBIfam" id="NF002223">
    <property type="entry name" value="PRK01117.1"/>
    <property type="match status" value="1"/>
</dbReference>
<dbReference type="NCBIfam" id="TIGR00184">
    <property type="entry name" value="purA"/>
    <property type="match status" value="1"/>
</dbReference>
<dbReference type="PANTHER" id="PTHR11846">
    <property type="entry name" value="ADENYLOSUCCINATE SYNTHETASE"/>
    <property type="match status" value="1"/>
</dbReference>
<dbReference type="PANTHER" id="PTHR11846:SF0">
    <property type="entry name" value="ADENYLOSUCCINATE SYNTHETASE"/>
    <property type="match status" value="1"/>
</dbReference>
<dbReference type="Pfam" id="PF00709">
    <property type="entry name" value="Adenylsucc_synt"/>
    <property type="match status" value="1"/>
</dbReference>
<dbReference type="SMART" id="SM00788">
    <property type="entry name" value="Adenylsucc_synt"/>
    <property type="match status" value="1"/>
</dbReference>
<dbReference type="SUPFAM" id="SSF52540">
    <property type="entry name" value="P-loop containing nucleoside triphosphate hydrolases"/>
    <property type="match status" value="1"/>
</dbReference>
<dbReference type="PROSITE" id="PS01266">
    <property type="entry name" value="ADENYLOSUCCIN_SYN_1"/>
    <property type="match status" value="1"/>
</dbReference>
<dbReference type="PROSITE" id="PS00513">
    <property type="entry name" value="ADENYLOSUCCIN_SYN_2"/>
    <property type="match status" value="1"/>
</dbReference>
<protein>
    <recommendedName>
        <fullName evidence="1">Adenylosuccinate synthetase</fullName>
        <shortName evidence="1">AMPSase</shortName>
        <shortName evidence="1">AdSS</shortName>
        <ecNumber evidence="1">6.3.4.4</ecNumber>
    </recommendedName>
    <alternativeName>
        <fullName evidence="1">IMP--aspartate ligase</fullName>
    </alternativeName>
</protein>
<accession>Q5F9J5</accession>